<evidence type="ECO:0000250" key="1"/>
<evidence type="ECO:0000255" key="2"/>
<evidence type="ECO:0000255" key="3">
    <source>
        <dbReference type="PROSITE-ProRule" id="PRU00289"/>
    </source>
</evidence>
<evidence type="ECO:0000256" key="4">
    <source>
        <dbReference type="SAM" id="MobiDB-lite"/>
    </source>
</evidence>
<evidence type="ECO:0000305" key="5"/>
<dbReference type="EMBL" id="AE008922">
    <property type="protein sequence ID" value="AAM41261.1"/>
    <property type="molecule type" value="Genomic_DNA"/>
</dbReference>
<dbReference type="RefSeq" id="NP_637337.1">
    <property type="nucleotide sequence ID" value="NC_003902.1"/>
</dbReference>
<dbReference type="RefSeq" id="WP_011037136.1">
    <property type="nucleotide sequence ID" value="NC_003902.1"/>
</dbReference>
<dbReference type="SMR" id="Q8P993"/>
<dbReference type="STRING" id="190485.XCC1972"/>
<dbReference type="EnsemblBacteria" id="AAM41261">
    <property type="protein sequence ID" value="AAM41261"/>
    <property type="gene ID" value="XCC1972"/>
</dbReference>
<dbReference type="KEGG" id="xcc:XCC1972"/>
<dbReference type="PATRIC" id="fig|190485.4.peg.2107"/>
<dbReference type="eggNOG" id="COG1674">
    <property type="taxonomic scope" value="Bacteria"/>
</dbReference>
<dbReference type="HOGENOM" id="CLU_001981_9_7_6"/>
<dbReference type="OrthoDB" id="9807790at2"/>
<dbReference type="Proteomes" id="UP000001010">
    <property type="component" value="Chromosome"/>
</dbReference>
<dbReference type="GO" id="GO:0005886">
    <property type="term" value="C:plasma membrane"/>
    <property type="evidence" value="ECO:0007669"/>
    <property type="project" value="UniProtKB-SubCell"/>
</dbReference>
<dbReference type="GO" id="GO:0005524">
    <property type="term" value="F:ATP binding"/>
    <property type="evidence" value="ECO:0007669"/>
    <property type="project" value="UniProtKB-KW"/>
</dbReference>
<dbReference type="GO" id="GO:0016887">
    <property type="term" value="F:ATP hydrolysis activity"/>
    <property type="evidence" value="ECO:0007669"/>
    <property type="project" value="InterPro"/>
</dbReference>
<dbReference type="GO" id="GO:0003677">
    <property type="term" value="F:DNA binding"/>
    <property type="evidence" value="ECO:0007669"/>
    <property type="project" value="UniProtKB-KW"/>
</dbReference>
<dbReference type="GO" id="GO:0015616">
    <property type="term" value="F:DNA translocase activity"/>
    <property type="evidence" value="ECO:0000318"/>
    <property type="project" value="GO_Central"/>
</dbReference>
<dbReference type="GO" id="GO:0051301">
    <property type="term" value="P:cell division"/>
    <property type="evidence" value="ECO:0007669"/>
    <property type="project" value="UniProtKB-KW"/>
</dbReference>
<dbReference type="GO" id="GO:0007059">
    <property type="term" value="P:chromosome segregation"/>
    <property type="evidence" value="ECO:0007669"/>
    <property type="project" value="UniProtKB-KW"/>
</dbReference>
<dbReference type="CDD" id="cd01127">
    <property type="entry name" value="TrwB_TraG_TraD_VirD4"/>
    <property type="match status" value="1"/>
</dbReference>
<dbReference type="FunFam" id="3.40.50.300:FF:000209">
    <property type="entry name" value="Cell division protein FtsK"/>
    <property type="match status" value="1"/>
</dbReference>
<dbReference type="Gene3D" id="3.30.980.40">
    <property type="match status" value="1"/>
</dbReference>
<dbReference type="Gene3D" id="3.40.50.300">
    <property type="entry name" value="P-loop containing nucleotide triphosphate hydrolases"/>
    <property type="match status" value="1"/>
</dbReference>
<dbReference type="Gene3D" id="1.10.10.10">
    <property type="entry name" value="Winged helix-like DNA-binding domain superfamily/Winged helix DNA-binding domain"/>
    <property type="match status" value="1"/>
</dbReference>
<dbReference type="InterPro" id="IPR003593">
    <property type="entry name" value="AAA+_ATPase"/>
</dbReference>
<dbReference type="InterPro" id="IPR050206">
    <property type="entry name" value="FtsK/SpoIIIE/SftA"/>
</dbReference>
<dbReference type="InterPro" id="IPR025199">
    <property type="entry name" value="FtsK_4TM"/>
</dbReference>
<dbReference type="InterPro" id="IPR041027">
    <property type="entry name" value="FtsK_alpha"/>
</dbReference>
<dbReference type="InterPro" id="IPR002543">
    <property type="entry name" value="FtsK_dom"/>
</dbReference>
<dbReference type="InterPro" id="IPR018541">
    <property type="entry name" value="Ftsk_gamma"/>
</dbReference>
<dbReference type="InterPro" id="IPR027417">
    <property type="entry name" value="P-loop_NTPase"/>
</dbReference>
<dbReference type="InterPro" id="IPR036388">
    <property type="entry name" value="WH-like_DNA-bd_sf"/>
</dbReference>
<dbReference type="InterPro" id="IPR036390">
    <property type="entry name" value="WH_DNA-bd_sf"/>
</dbReference>
<dbReference type="PANTHER" id="PTHR22683:SF41">
    <property type="entry name" value="DNA TRANSLOCASE FTSK"/>
    <property type="match status" value="1"/>
</dbReference>
<dbReference type="PANTHER" id="PTHR22683">
    <property type="entry name" value="SPORULATION PROTEIN RELATED"/>
    <property type="match status" value="1"/>
</dbReference>
<dbReference type="Pfam" id="PF13491">
    <property type="entry name" value="FtsK_4TM"/>
    <property type="match status" value="1"/>
</dbReference>
<dbReference type="Pfam" id="PF17854">
    <property type="entry name" value="FtsK_alpha"/>
    <property type="match status" value="1"/>
</dbReference>
<dbReference type="Pfam" id="PF09397">
    <property type="entry name" value="FtsK_gamma"/>
    <property type="match status" value="1"/>
</dbReference>
<dbReference type="Pfam" id="PF01580">
    <property type="entry name" value="FtsK_SpoIIIE"/>
    <property type="match status" value="1"/>
</dbReference>
<dbReference type="SMART" id="SM00382">
    <property type="entry name" value="AAA"/>
    <property type="match status" value="1"/>
</dbReference>
<dbReference type="SMART" id="SM00843">
    <property type="entry name" value="Ftsk_gamma"/>
    <property type="match status" value="1"/>
</dbReference>
<dbReference type="SUPFAM" id="SSF52540">
    <property type="entry name" value="P-loop containing nucleoside triphosphate hydrolases"/>
    <property type="match status" value="1"/>
</dbReference>
<dbReference type="SUPFAM" id="SSF46785">
    <property type="entry name" value="Winged helix' DNA-binding domain"/>
    <property type="match status" value="1"/>
</dbReference>
<dbReference type="PROSITE" id="PS50901">
    <property type="entry name" value="FTSK"/>
    <property type="match status" value="1"/>
</dbReference>
<sequence>MAKQVPERSKPAEGKSSSRKPAAADTPRRQKLWRDLALIAVAPLLLYLLASLFTYSAADPGWSQTGSVVAPVHNMGGRVGAWIADVLLQLFGYVAFLLPVVLGAVAWIALFGMDKEGQAEADLGPALRLVGMVGFLIASTGFLHLRLFNGDVAGAGGILGRLVSNSLSAGFGALGANLFVVVLLLVSITLATGLSWFVVMERIGKWVLALGPLLQRKSHQATEWQQTRVMREEREEVRKVDAVKQAKREPVKIEPPPAPVVEKSERAKRDTQIPMFQGVSTDGSDLPPLALLDDPKPQAKGYSEETLETLSRQIEFKLKDFRIEAQVVGAYPGPVITRFEIEPAPGVKVSQISSLDKDIARGLSVKSVRVVDVIPGKSVVGLEIPNVTREMIFLSELLRSKEYDKSASPLTLALGKDIAGRPTVADLARMPHLLVAGTTGSGKSVAVNAMVLSLLFKASHKELRMLMIDPKMLELSVYQGIPHLLAPVVTDMKEAANGLRWCVAEMERRYKLMSAVGVRNLAGFNKKVKDAEDAGQPMMDPLFKPNPELGEAPRPLETLPFIVIFIDEFADMMMIVGKKVEELIARLAQKARAAGIHLILATQRPSVDVITGLIKANIPTRVAFQVSSKIDSRTILDQSGAEALLGNGDMLYLPPGTALPDRVHGAFVSDEEVHRVVEHLKASGPVAYVDGVLDEVQTMGDGTVVGATGLPESSGGGGDESDPLYDEALRIVTETRRASISGVQRRLKIGYNRAARLIEAMEAAGVVSPPEHNGDRTVLAPPPPK</sequence>
<gene>
    <name type="primary">ftsK</name>
    <name type="ordered locus">XCC1972</name>
</gene>
<accession>Q8P993</accession>
<reference key="1">
    <citation type="journal article" date="2002" name="Nature">
        <title>Comparison of the genomes of two Xanthomonas pathogens with differing host specificities.</title>
        <authorList>
            <person name="da Silva A.C.R."/>
            <person name="Ferro J.A."/>
            <person name="Reinach F.C."/>
            <person name="Farah C.S."/>
            <person name="Furlan L.R."/>
            <person name="Quaggio R.B."/>
            <person name="Monteiro-Vitorello C.B."/>
            <person name="Van Sluys M.A."/>
            <person name="Almeida N.F. Jr."/>
            <person name="Alves L.M.C."/>
            <person name="do Amaral A.M."/>
            <person name="Bertolini M.C."/>
            <person name="Camargo L.E.A."/>
            <person name="Camarotte G."/>
            <person name="Cannavan F."/>
            <person name="Cardozo J."/>
            <person name="Chambergo F."/>
            <person name="Ciapina L.P."/>
            <person name="Cicarelli R.M.B."/>
            <person name="Coutinho L.L."/>
            <person name="Cursino-Santos J.R."/>
            <person name="El-Dorry H."/>
            <person name="Faria J.B."/>
            <person name="Ferreira A.J.S."/>
            <person name="Ferreira R.C.C."/>
            <person name="Ferro M.I.T."/>
            <person name="Formighieri E.F."/>
            <person name="Franco M.C."/>
            <person name="Greggio C.C."/>
            <person name="Gruber A."/>
            <person name="Katsuyama A.M."/>
            <person name="Kishi L.T."/>
            <person name="Leite R.P."/>
            <person name="Lemos E.G.M."/>
            <person name="Lemos M.V.F."/>
            <person name="Locali E.C."/>
            <person name="Machado M.A."/>
            <person name="Madeira A.M.B.N."/>
            <person name="Martinez-Rossi N.M."/>
            <person name="Martins E.C."/>
            <person name="Meidanis J."/>
            <person name="Menck C.F.M."/>
            <person name="Miyaki C.Y."/>
            <person name="Moon D.H."/>
            <person name="Moreira L.M."/>
            <person name="Novo M.T.M."/>
            <person name="Okura V.K."/>
            <person name="Oliveira M.C."/>
            <person name="Oliveira V.R."/>
            <person name="Pereira H.A."/>
            <person name="Rossi A."/>
            <person name="Sena J.A.D."/>
            <person name="Silva C."/>
            <person name="de Souza R.F."/>
            <person name="Spinola L.A.F."/>
            <person name="Takita M.A."/>
            <person name="Tamura R.E."/>
            <person name="Teixeira E.C."/>
            <person name="Tezza R.I.D."/>
            <person name="Trindade dos Santos M."/>
            <person name="Truffi D."/>
            <person name="Tsai S.M."/>
            <person name="White F.F."/>
            <person name="Setubal J.C."/>
            <person name="Kitajima J.P."/>
        </authorList>
    </citation>
    <scope>NUCLEOTIDE SEQUENCE [LARGE SCALE GENOMIC DNA]</scope>
    <source>
        <strain>ATCC 33913 / DSM 3586 / NCPPB 528 / LMG 568 / P 25</strain>
    </source>
</reference>
<comment type="function">
    <text evidence="1">Essential cell division protein that coordinates cell division and chromosome segregation. The N-terminus is involved in assembly of the cell-division machinery. The C-terminus functions as a DNA motor that moves dsDNA in an ATP-dependent manner towards the dif recombination site, which is located within the replication terminus region. Translocation stops specifically at Xer-dif sites, where FtsK interacts with the Xer recombinase, allowing activation of chromosome unlinking by recombination. FtsK orienting polar sequences (KOPS) guide the direction of DNA translocation. FtsK can remove proteins from DNA as it translocates, but translocation stops specifically at XerCD-dif site, thereby preventing removal of XerC and XerD from dif (By similarity).</text>
</comment>
<comment type="subunit">
    <text evidence="1">Homohexamer. Forms a ring that surrounds DNA (By similarity).</text>
</comment>
<comment type="subcellular location">
    <subcellularLocation>
        <location evidence="1">Cell inner membrane</location>
        <topology evidence="1">Multi-pass membrane protein</topology>
    </subcellularLocation>
    <text evidence="1">Located at the septum.</text>
</comment>
<comment type="domain">
    <text evidence="1">Consists of an N-terminal domain, which is sufficient for the localization to the septal ring and is required for cell division, followed by a linker domain, and a C-terminal domain, which forms the translocation motor involved in chromosome segregation. The C-terminal domain can be further subdivided into alpha, beta and gamma subdomains. The alpha and beta subdomains multimerise to produce a hexameric ring, contain the nucleotide binding motif and form the DNA pump. The gamma subdomain is a regulatory subdomain that controls translocation of DNA by recognition of KOPS motifs and interacts with XerD recombinase (By similarity).</text>
</comment>
<comment type="similarity">
    <text evidence="5">Belongs to the FtsK/SpoIIIE/SftA family.</text>
</comment>
<keyword id="KW-0067">ATP-binding</keyword>
<keyword id="KW-0131">Cell cycle</keyword>
<keyword id="KW-0132">Cell division</keyword>
<keyword id="KW-0997">Cell inner membrane</keyword>
<keyword id="KW-1003">Cell membrane</keyword>
<keyword id="KW-0159">Chromosome partition</keyword>
<keyword id="KW-0238">DNA-binding</keyword>
<keyword id="KW-0472">Membrane</keyword>
<keyword id="KW-0547">Nucleotide-binding</keyword>
<keyword id="KW-1185">Reference proteome</keyword>
<keyword id="KW-0812">Transmembrane</keyword>
<keyword id="KW-1133">Transmembrane helix</keyword>
<name>FTSK_XANCP</name>
<proteinExistence type="inferred from homology"/>
<feature type="chain" id="PRO_0000098320" description="DNA translocase FtsK">
    <location>
        <begin position="1"/>
        <end position="785"/>
    </location>
</feature>
<feature type="transmembrane region" description="Helical" evidence="2">
    <location>
        <begin position="36"/>
        <end position="56"/>
    </location>
</feature>
<feature type="transmembrane region" description="Helical" evidence="2">
    <location>
        <begin position="91"/>
        <end position="111"/>
    </location>
</feature>
<feature type="transmembrane region" description="Helical" evidence="2">
    <location>
        <begin position="123"/>
        <end position="143"/>
    </location>
</feature>
<feature type="transmembrane region" description="Helical" evidence="2">
    <location>
        <begin position="152"/>
        <end position="171"/>
    </location>
</feature>
<feature type="transmembrane region" description="Helical" evidence="2">
    <location>
        <begin position="179"/>
        <end position="199"/>
    </location>
</feature>
<feature type="topological domain" description="Cytoplasmic" evidence="2">
    <location>
        <begin position="200"/>
        <end position="785"/>
    </location>
</feature>
<feature type="domain" description="FtsK" evidence="3">
    <location>
        <begin position="420"/>
        <end position="633"/>
    </location>
</feature>
<feature type="region of interest" description="Disordered" evidence="4">
    <location>
        <begin position="1"/>
        <end position="26"/>
    </location>
</feature>
<feature type="compositionally biased region" description="Basic and acidic residues" evidence="4">
    <location>
        <begin position="1"/>
        <end position="13"/>
    </location>
</feature>
<feature type="binding site" evidence="3">
    <location>
        <begin position="440"/>
        <end position="445"/>
    </location>
    <ligand>
        <name>ATP</name>
        <dbReference type="ChEBI" id="CHEBI:30616"/>
    </ligand>
</feature>
<organism>
    <name type="scientific">Xanthomonas campestris pv. campestris (strain ATCC 33913 / DSM 3586 / NCPPB 528 / LMG 568 / P 25)</name>
    <dbReference type="NCBI Taxonomy" id="190485"/>
    <lineage>
        <taxon>Bacteria</taxon>
        <taxon>Pseudomonadati</taxon>
        <taxon>Pseudomonadota</taxon>
        <taxon>Gammaproteobacteria</taxon>
        <taxon>Lysobacterales</taxon>
        <taxon>Lysobacteraceae</taxon>
        <taxon>Xanthomonas</taxon>
    </lineage>
</organism>
<protein>
    <recommendedName>
        <fullName>DNA translocase FtsK</fullName>
    </recommendedName>
</protein>